<organismHost>
    <name type="scientific">Acheta domesticus</name>
    <name type="common">House cricket</name>
    <dbReference type="NCBI Taxonomy" id="6997"/>
</organismHost>
<organismHost>
    <name type="scientific">Chilo suppressalis</name>
    <name type="common">Asiatic rice borer moth</name>
    <dbReference type="NCBI Taxonomy" id="168631"/>
</organismHost>
<organismHost>
    <name type="scientific">Gryllus bimaculatus</name>
    <name type="common">Two-spotted cricket</name>
    <dbReference type="NCBI Taxonomy" id="6999"/>
</organismHost>
<organismHost>
    <name type="scientific">Gryllus campestris</name>
    <dbReference type="NCBI Taxonomy" id="58607"/>
</organismHost>
<organismHost>
    <name type="scientific">Spodoptera frugiperda</name>
    <name type="common">Fall armyworm</name>
    <dbReference type="NCBI Taxonomy" id="7108"/>
</organismHost>
<name>413R_IIV6</name>
<sequence>MDAIFYPLPIGETGDNEKYLEDFQEEDFQEEDFQEEDFQEEDFQEEDEDEEDEEVNEYPSDLDDEYPDSDYYDERSDRHWSDDDSDRDLDDLYDEYENYYEEVQVKKQNLEVEIIDITPEIEILNQNEKEKFNQVEDKLTTLSKNLTCIICLTNQVQILTIPCGHLIMCNPCSLNLNNSVCTRGVNSNYEKCPKCRTPIYNKIIARLP</sequence>
<dbReference type="EMBL" id="L22300">
    <property type="protein sequence ID" value="AAA17844.1"/>
    <property type="molecule type" value="Genomic_DNA"/>
</dbReference>
<dbReference type="EMBL" id="AF303741">
    <property type="protein sequence ID" value="AAK82273.1"/>
    <property type="molecule type" value="Genomic_DNA"/>
</dbReference>
<dbReference type="PIR" id="S77736">
    <property type="entry name" value="S77736"/>
</dbReference>
<dbReference type="RefSeq" id="NP_149876.1">
    <property type="nucleotide sequence ID" value="NC_003038.1"/>
</dbReference>
<dbReference type="KEGG" id="vg:1732974"/>
<dbReference type="OrthoDB" id="315at10486"/>
<dbReference type="Proteomes" id="UP000001359">
    <property type="component" value="Genome"/>
</dbReference>
<dbReference type="GO" id="GO:0008270">
    <property type="term" value="F:zinc ion binding"/>
    <property type="evidence" value="ECO:0007669"/>
    <property type="project" value="UniProtKB-KW"/>
</dbReference>
<dbReference type="Gene3D" id="3.30.40.10">
    <property type="entry name" value="Zinc/RING finger domain, C3HC4 (zinc finger)"/>
    <property type="match status" value="1"/>
</dbReference>
<dbReference type="InterPro" id="IPR001841">
    <property type="entry name" value="Znf_RING"/>
</dbReference>
<dbReference type="InterPro" id="IPR013083">
    <property type="entry name" value="Znf_RING/FYVE/PHD"/>
</dbReference>
<dbReference type="Pfam" id="PF13920">
    <property type="entry name" value="zf-C3HC4_3"/>
    <property type="match status" value="1"/>
</dbReference>
<dbReference type="SMART" id="SM00184">
    <property type="entry name" value="RING"/>
    <property type="match status" value="1"/>
</dbReference>
<dbReference type="SUPFAM" id="SSF57850">
    <property type="entry name" value="RING/U-box"/>
    <property type="match status" value="1"/>
</dbReference>
<dbReference type="PROSITE" id="PS50089">
    <property type="entry name" value="ZF_RING_2"/>
    <property type="match status" value="1"/>
</dbReference>
<gene>
    <name type="primary">EF2</name>
    <name type="ORF">IIV6-413R</name>
</gene>
<evidence type="ECO:0000255" key="1"/>
<evidence type="ECO:0000255" key="2">
    <source>
        <dbReference type="PROSITE-ProRule" id="PRU00175"/>
    </source>
</evidence>
<evidence type="ECO:0000256" key="3">
    <source>
        <dbReference type="SAM" id="MobiDB-lite"/>
    </source>
</evidence>
<evidence type="ECO:0000305" key="4"/>
<protein>
    <recommendedName>
        <fullName>Putative RING finger protein 413R</fullName>
    </recommendedName>
</protein>
<accession>P40629</accession>
<accession>Q91FB2</accession>
<keyword id="KW-0175">Coiled coil</keyword>
<keyword id="KW-0479">Metal-binding</keyword>
<keyword id="KW-1185">Reference proteome</keyword>
<keyword id="KW-0862">Zinc</keyword>
<keyword id="KW-0863">Zinc-finger</keyword>
<organism>
    <name type="scientific">Invertebrate iridescent virus 6</name>
    <name type="common">IIV-6</name>
    <name type="synonym">Chilo iridescent virus</name>
    <dbReference type="NCBI Taxonomy" id="176652"/>
    <lineage>
        <taxon>Viruses</taxon>
        <taxon>Varidnaviria</taxon>
        <taxon>Bamfordvirae</taxon>
        <taxon>Nucleocytoviricota</taxon>
        <taxon>Megaviricetes</taxon>
        <taxon>Pimascovirales</taxon>
        <taxon>Iridoviridae</taxon>
        <taxon>Betairidovirinae</taxon>
        <taxon>Iridovirus</taxon>
    </lineage>
</organism>
<reference key="1">
    <citation type="journal article" date="1994" name="Nucleic Acids Res.">
        <title>Identification of genes encoding zinc finger proteins, non-histone chromosomal HMG protein homologue, and a putative GTP phosphohydrolase in the genome of Chilo iridescent virus.</title>
        <authorList>
            <person name="Schnitzler P."/>
            <person name="Hug M."/>
            <person name="Handermann M."/>
            <person name="Janssen W."/>
            <person name="Koonin E.V."/>
            <person name="Delius H."/>
            <person name="Darai C."/>
        </authorList>
    </citation>
    <scope>NUCLEOTIDE SEQUENCE [GENOMIC DNA]</scope>
</reference>
<reference key="2">
    <citation type="journal article" date="2001" name="Virology">
        <title>Analysis of the first complete DNA sequence of an invertebrate iridovirus: coding strategy of the genome of Chilo iridescent virus.</title>
        <authorList>
            <person name="Jakob N.J."/>
            <person name="Mueller K."/>
            <person name="Bahr U."/>
            <person name="Darai G."/>
        </authorList>
    </citation>
    <scope>NUCLEOTIDE SEQUENCE [LARGE SCALE GENOMIC DNA]</scope>
</reference>
<reference key="3">
    <citation type="journal article" date="2007" name="Virol. J.">
        <title>Comparative genomic analysis of the family Iridoviridae: re-annotating and defining the core set of iridovirus genes.</title>
        <authorList>
            <person name="Eaton H.E."/>
            <person name="Metcalf J."/>
            <person name="Penny E."/>
            <person name="Tcherepanov V."/>
            <person name="Upton C."/>
            <person name="Brunetti C.R."/>
        </authorList>
    </citation>
    <scope>GENOME REANNOTATION</scope>
</reference>
<feature type="chain" id="PRO_0000056410" description="Putative RING finger protein 413R">
    <location>
        <begin position="1"/>
        <end position="208"/>
    </location>
</feature>
<feature type="zinc finger region" description="RING-type" evidence="2">
    <location>
        <begin position="148"/>
        <end position="196"/>
    </location>
</feature>
<feature type="region of interest" description="Disordered" evidence="3">
    <location>
        <begin position="1"/>
        <end position="87"/>
    </location>
</feature>
<feature type="coiled-coil region" evidence="1">
    <location>
        <begin position="83"/>
        <end position="147"/>
    </location>
</feature>
<feature type="compositionally biased region" description="Acidic residues" evidence="3">
    <location>
        <begin position="22"/>
        <end position="71"/>
    </location>
</feature>
<feature type="compositionally biased region" description="Basic and acidic residues" evidence="3">
    <location>
        <begin position="72"/>
        <end position="82"/>
    </location>
</feature>
<feature type="sequence conflict" description="In Ref. 1; AAK82273." evidence="4" ref="1">
    <original>MDAIFYPLPIGETGDNEKYLEDFQEEDFQEEDFQEEDFQEEDFQEEDEDEEDEEVNEYPSDLDDEYPDSDYYDERSDRHWSDD</original>
    <variation>MNIQIQIIMMKDQIVIGLMT</variation>
    <location>
        <begin position="1"/>
        <end position="83"/>
    </location>
</feature>
<proteinExistence type="predicted"/>